<comment type="function">
    <text evidence="1">Located at the top of the head of the 30S subunit, it contacts several helices of the 16S rRNA. In the 70S ribosome it contacts the 23S rRNA (bridge B1a) and protein L5 of the 50S subunit (bridge B1b), connecting the 2 subunits; these bridges are implicated in subunit movement. Contacts the tRNAs in the A and P-sites.</text>
</comment>
<comment type="subunit">
    <text evidence="1">Part of the 30S ribosomal subunit. Forms a loose heterodimer with protein S19. Forms two bridges to the 50S subunit in the 70S ribosome.</text>
</comment>
<comment type="similarity">
    <text evidence="1">Belongs to the universal ribosomal protein uS13 family.</text>
</comment>
<protein>
    <recommendedName>
        <fullName evidence="1">Small ribosomal subunit protein uS13</fullName>
    </recommendedName>
    <alternativeName>
        <fullName evidence="3">30S ribosomal protein S13</fullName>
    </alternativeName>
</protein>
<reference key="1">
    <citation type="journal article" date="2001" name="Science">
        <title>Complete genome sequence of a virulent isolate of Streptococcus pneumoniae.</title>
        <authorList>
            <person name="Tettelin H."/>
            <person name="Nelson K.E."/>
            <person name="Paulsen I.T."/>
            <person name="Eisen J.A."/>
            <person name="Read T.D."/>
            <person name="Peterson S.N."/>
            <person name="Heidelberg J.F."/>
            <person name="DeBoy R.T."/>
            <person name="Haft D.H."/>
            <person name="Dodson R.J."/>
            <person name="Durkin A.S."/>
            <person name="Gwinn M.L."/>
            <person name="Kolonay J.F."/>
            <person name="Nelson W.C."/>
            <person name="Peterson J.D."/>
            <person name="Umayam L.A."/>
            <person name="White O."/>
            <person name="Salzberg S.L."/>
            <person name="Lewis M.R."/>
            <person name="Radune D."/>
            <person name="Holtzapple E.K."/>
            <person name="Khouri H.M."/>
            <person name="Wolf A.M."/>
            <person name="Utterback T.R."/>
            <person name="Hansen C.L."/>
            <person name="McDonald L.A."/>
            <person name="Feldblyum T.V."/>
            <person name="Angiuoli S.V."/>
            <person name="Dickinson T."/>
            <person name="Hickey E.K."/>
            <person name="Holt I.E."/>
            <person name="Loftus B.J."/>
            <person name="Yang F."/>
            <person name="Smith H.O."/>
            <person name="Venter J.C."/>
            <person name="Dougherty B.A."/>
            <person name="Morrison D.A."/>
            <person name="Hollingshead S.K."/>
            <person name="Fraser C.M."/>
        </authorList>
    </citation>
    <scope>NUCLEOTIDE SEQUENCE [LARGE SCALE GENOMIC DNA]</scope>
    <source>
        <strain>ATCC BAA-334 / TIGR4</strain>
    </source>
</reference>
<name>RS13_STRPN</name>
<accession>P66392</accession>
<accession>Q8CWU9</accession>
<accession>Q97ST9</accession>
<sequence length="121" mass="13422">MARIAGVDIPNDKRVVISLTYVYGIGLATSKKILAAAGISEDVRVRDLTSDQEDAIRREVDAIKVEGDLRREVNLNIKRLMEIGSYRGIRHRRGLPVRGQNTKNNARTRKGKAVAIAGKKK</sequence>
<evidence type="ECO:0000255" key="1">
    <source>
        <dbReference type="HAMAP-Rule" id="MF_01315"/>
    </source>
</evidence>
<evidence type="ECO:0000256" key="2">
    <source>
        <dbReference type="SAM" id="MobiDB-lite"/>
    </source>
</evidence>
<evidence type="ECO:0000305" key="3"/>
<proteinExistence type="inferred from homology"/>
<feature type="chain" id="PRO_0000132149" description="Small ribosomal subunit protein uS13">
    <location>
        <begin position="1"/>
        <end position="121"/>
    </location>
</feature>
<feature type="region of interest" description="Disordered" evidence="2">
    <location>
        <begin position="96"/>
        <end position="121"/>
    </location>
</feature>
<feature type="compositionally biased region" description="Basic residues" evidence="2">
    <location>
        <begin position="106"/>
        <end position="121"/>
    </location>
</feature>
<keyword id="KW-1185">Reference proteome</keyword>
<keyword id="KW-0687">Ribonucleoprotein</keyword>
<keyword id="KW-0689">Ribosomal protein</keyword>
<keyword id="KW-0694">RNA-binding</keyword>
<keyword id="KW-0699">rRNA-binding</keyword>
<keyword id="KW-0820">tRNA-binding</keyword>
<organism>
    <name type="scientific">Streptococcus pneumoniae serotype 4 (strain ATCC BAA-334 / TIGR4)</name>
    <dbReference type="NCBI Taxonomy" id="170187"/>
    <lineage>
        <taxon>Bacteria</taxon>
        <taxon>Bacillati</taxon>
        <taxon>Bacillota</taxon>
        <taxon>Bacilli</taxon>
        <taxon>Lactobacillales</taxon>
        <taxon>Streptococcaceae</taxon>
        <taxon>Streptococcus</taxon>
    </lineage>
</organism>
<gene>
    <name evidence="1" type="primary">rpsM</name>
    <name type="ordered locus">SP_0234</name>
</gene>
<dbReference type="EMBL" id="AE005672">
    <property type="protein sequence ID" value="AAK74414.1"/>
    <property type="molecule type" value="Genomic_DNA"/>
</dbReference>
<dbReference type="PIR" id="E95027">
    <property type="entry name" value="E95027"/>
</dbReference>
<dbReference type="RefSeq" id="WP_000090781.1">
    <property type="nucleotide sequence ID" value="NZ_CP155539.1"/>
</dbReference>
<dbReference type="SMR" id="P66392"/>
<dbReference type="PaxDb" id="170187-SP_0234"/>
<dbReference type="EnsemblBacteria" id="AAK74414">
    <property type="protein sequence ID" value="AAK74414"/>
    <property type="gene ID" value="SP_0234"/>
</dbReference>
<dbReference type="GeneID" id="93738981"/>
<dbReference type="KEGG" id="spn:SP_0234"/>
<dbReference type="eggNOG" id="COG0099">
    <property type="taxonomic scope" value="Bacteria"/>
</dbReference>
<dbReference type="PhylomeDB" id="P66392"/>
<dbReference type="BioCyc" id="SPNE170187:G1FZB-238-MONOMER"/>
<dbReference type="Proteomes" id="UP000000585">
    <property type="component" value="Chromosome"/>
</dbReference>
<dbReference type="GO" id="GO:0005829">
    <property type="term" value="C:cytosol"/>
    <property type="evidence" value="ECO:0007669"/>
    <property type="project" value="TreeGrafter"/>
</dbReference>
<dbReference type="GO" id="GO:0015935">
    <property type="term" value="C:small ribosomal subunit"/>
    <property type="evidence" value="ECO:0007669"/>
    <property type="project" value="TreeGrafter"/>
</dbReference>
<dbReference type="GO" id="GO:0019843">
    <property type="term" value="F:rRNA binding"/>
    <property type="evidence" value="ECO:0007669"/>
    <property type="project" value="UniProtKB-UniRule"/>
</dbReference>
<dbReference type="GO" id="GO:0003735">
    <property type="term" value="F:structural constituent of ribosome"/>
    <property type="evidence" value="ECO:0007669"/>
    <property type="project" value="InterPro"/>
</dbReference>
<dbReference type="GO" id="GO:0000049">
    <property type="term" value="F:tRNA binding"/>
    <property type="evidence" value="ECO:0007669"/>
    <property type="project" value="UniProtKB-UniRule"/>
</dbReference>
<dbReference type="GO" id="GO:0006412">
    <property type="term" value="P:translation"/>
    <property type="evidence" value="ECO:0007669"/>
    <property type="project" value="UniProtKB-UniRule"/>
</dbReference>
<dbReference type="FunFam" id="1.10.8.50:FF:000001">
    <property type="entry name" value="30S ribosomal protein S13"/>
    <property type="match status" value="1"/>
</dbReference>
<dbReference type="FunFam" id="4.10.910.10:FF:000001">
    <property type="entry name" value="30S ribosomal protein S13"/>
    <property type="match status" value="1"/>
</dbReference>
<dbReference type="Gene3D" id="1.10.8.50">
    <property type="match status" value="1"/>
</dbReference>
<dbReference type="Gene3D" id="4.10.910.10">
    <property type="entry name" value="30s ribosomal protein s13, domain 2"/>
    <property type="match status" value="1"/>
</dbReference>
<dbReference type="HAMAP" id="MF_01315">
    <property type="entry name" value="Ribosomal_uS13"/>
    <property type="match status" value="1"/>
</dbReference>
<dbReference type="InterPro" id="IPR027437">
    <property type="entry name" value="Rbsml_uS13_C"/>
</dbReference>
<dbReference type="InterPro" id="IPR001892">
    <property type="entry name" value="Ribosomal_uS13"/>
</dbReference>
<dbReference type="InterPro" id="IPR010979">
    <property type="entry name" value="Ribosomal_uS13-like_H2TH"/>
</dbReference>
<dbReference type="InterPro" id="IPR019980">
    <property type="entry name" value="Ribosomal_uS13_bac-type"/>
</dbReference>
<dbReference type="InterPro" id="IPR018269">
    <property type="entry name" value="Ribosomal_uS13_CS"/>
</dbReference>
<dbReference type="NCBIfam" id="TIGR03631">
    <property type="entry name" value="uS13_bact"/>
    <property type="match status" value="1"/>
</dbReference>
<dbReference type="PANTHER" id="PTHR10871">
    <property type="entry name" value="30S RIBOSOMAL PROTEIN S13/40S RIBOSOMAL PROTEIN S18"/>
    <property type="match status" value="1"/>
</dbReference>
<dbReference type="PANTHER" id="PTHR10871:SF1">
    <property type="entry name" value="SMALL RIBOSOMAL SUBUNIT PROTEIN US13M"/>
    <property type="match status" value="1"/>
</dbReference>
<dbReference type="Pfam" id="PF00416">
    <property type="entry name" value="Ribosomal_S13"/>
    <property type="match status" value="1"/>
</dbReference>
<dbReference type="PIRSF" id="PIRSF002134">
    <property type="entry name" value="Ribosomal_S13"/>
    <property type="match status" value="1"/>
</dbReference>
<dbReference type="SUPFAM" id="SSF46946">
    <property type="entry name" value="S13-like H2TH domain"/>
    <property type="match status" value="1"/>
</dbReference>
<dbReference type="PROSITE" id="PS00646">
    <property type="entry name" value="RIBOSOMAL_S13_1"/>
    <property type="match status" value="1"/>
</dbReference>
<dbReference type="PROSITE" id="PS50159">
    <property type="entry name" value="RIBOSOMAL_S13_2"/>
    <property type="match status" value="1"/>
</dbReference>